<feature type="chain" id="PRO_0000061957" description="Allantoate amidohydrolase">
    <location>
        <begin position="1"/>
        <end position="411"/>
    </location>
</feature>
<feature type="binding site" evidence="2 12">
    <location>
        <position position="81"/>
    </location>
    <ligand>
        <name>Zn(2+)</name>
        <dbReference type="ChEBI" id="CHEBI:29105"/>
        <label>1</label>
    </ligand>
</feature>
<feature type="binding site" evidence="2 12">
    <location>
        <position position="92"/>
    </location>
    <ligand>
        <name>Zn(2+)</name>
        <dbReference type="ChEBI" id="CHEBI:29105"/>
        <label>1</label>
    </ligand>
</feature>
<feature type="binding site" evidence="2 11 12 13">
    <location>
        <position position="92"/>
    </location>
    <ligand>
        <name>Zn(2+)</name>
        <dbReference type="ChEBI" id="CHEBI:29105"/>
        <label>2</label>
    </ligand>
</feature>
<feature type="binding site" evidence="2 11 12 13">
    <location>
        <position position="127"/>
    </location>
    <ligand>
        <name>Zn(2+)</name>
        <dbReference type="ChEBI" id="CHEBI:29105"/>
        <label>2</label>
    </ligand>
</feature>
<feature type="binding site" evidence="2 12">
    <location>
        <position position="190"/>
    </location>
    <ligand>
        <name>Zn(2+)</name>
        <dbReference type="ChEBI" id="CHEBI:29105"/>
        <label>1</label>
    </ligand>
</feature>
<feature type="binding site" evidence="2 12">
    <location>
        <position position="215"/>
    </location>
    <ligand>
        <name>allantoate</name>
        <dbReference type="ChEBI" id="CHEBI:17536"/>
    </ligand>
</feature>
<feature type="binding site" evidence="2 4 12 13">
    <location>
        <position position="275"/>
    </location>
    <ligand>
        <name>allantoate</name>
        <dbReference type="ChEBI" id="CHEBI:17536"/>
    </ligand>
</feature>
<feature type="binding site" evidence="2 4 12 13">
    <location>
        <position position="288"/>
    </location>
    <ligand>
        <name>allantoate</name>
        <dbReference type="ChEBI" id="CHEBI:17536"/>
    </ligand>
</feature>
<feature type="binding site" evidence="2 11 12 13">
    <location>
        <position position="382"/>
    </location>
    <ligand>
        <name>Zn(2+)</name>
        <dbReference type="ChEBI" id="CHEBI:29105"/>
        <label>2</label>
    </ligand>
</feature>
<feature type="mutagenesis site" description="Loss of amidohydrolase activity. Large movement of the catalytic domain into a closed conformation." evidence="4">
    <original>E</original>
    <variation>A</variation>
    <location>
        <position position="126"/>
    </location>
</feature>
<feature type="helix" evidence="16">
    <location>
        <begin position="2"/>
        <end position="18"/>
    </location>
</feature>
<feature type="strand" evidence="16">
    <location>
        <begin position="25"/>
        <end position="27"/>
    </location>
</feature>
<feature type="helix" evidence="16">
    <location>
        <begin position="34"/>
        <end position="49"/>
    </location>
</feature>
<feature type="strand" evidence="16">
    <location>
        <begin position="53"/>
        <end position="56"/>
    </location>
</feature>
<feature type="strand" evidence="16">
    <location>
        <begin position="62"/>
        <end position="66"/>
    </location>
</feature>
<feature type="strand" evidence="16">
    <location>
        <begin position="69"/>
        <end position="81"/>
    </location>
</feature>
<feature type="helix" evidence="16">
    <location>
        <begin position="94"/>
        <end position="111"/>
    </location>
</feature>
<feature type="strand" evidence="16">
    <location>
        <begin position="115"/>
        <end position="124"/>
    </location>
</feature>
<feature type="strand" evidence="16">
    <location>
        <begin position="130"/>
        <end position="132"/>
    </location>
</feature>
<feature type="helix" evidence="16">
    <location>
        <begin position="136"/>
        <end position="141"/>
    </location>
</feature>
<feature type="helix" evidence="16">
    <location>
        <begin position="147"/>
        <end position="149"/>
    </location>
</feature>
<feature type="turn" evidence="16">
    <location>
        <begin position="150"/>
        <end position="152"/>
    </location>
</feature>
<feature type="strand" evidence="14">
    <location>
        <begin position="156"/>
        <end position="158"/>
    </location>
</feature>
<feature type="helix" evidence="16">
    <location>
        <begin position="161"/>
        <end position="167"/>
    </location>
</feature>
<feature type="strand" evidence="16">
    <location>
        <begin position="183"/>
        <end position="191"/>
    </location>
</feature>
<feature type="strand" evidence="15">
    <location>
        <begin position="193"/>
        <end position="195"/>
    </location>
</feature>
<feature type="helix" evidence="16">
    <location>
        <begin position="196"/>
        <end position="199"/>
    </location>
</feature>
<feature type="strand" evidence="16">
    <location>
        <begin position="203"/>
        <end position="210"/>
    </location>
</feature>
<feature type="strand" evidence="16">
    <location>
        <begin position="212"/>
        <end position="221"/>
    </location>
</feature>
<feature type="turn" evidence="16">
    <location>
        <begin position="227"/>
        <end position="229"/>
    </location>
</feature>
<feature type="helix" evidence="16">
    <location>
        <begin position="232"/>
        <end position="234"/>
    </location>
</feature>
<feature type="helix" evidence="16">
    <location>
        <begin position="238"/>
        <end position="256"/>
    </location>
</feature>
<feature type="strand" evidence="16">
    <location>
        <begin position="261"/>
        <end position="263"/>
    </location>
</feature>
<feature type="strand" evidence="16">
    <location>
        <begin position="267"/>
        <end position="271"/>
    </location>
</feature>
<feature type="strand" evidence="16">
    <location>
        <begin position="279"/>
        <end position="291"/>
    </location>
</feature>
<feature type="helix" evidence="16">
    <location>
        <begin position="292"/>
        <end position="313"/>
    </location>
</feature>
<feature type="strand" evidence="16">
    <location>
        <begin position="316"/>
        <end position="325"/>
    </location>
</feature>
<feature type="helix" evidence="16">
    <location>
        <begin position="332"/>
        <end position="344"/>
    </location>
</feature>
<feature type="strand" evidence="16">
    <location>
        <begin position="349"/>
        <end position="356"/>
    </location>
</feature>
<feature type="helix" evidence="16">
    <location>
        <begin position="359"/>
        <end position="363"/>
    </location>
</feature>
<feature type="turn" evidence="16">
    <location>
        <begin position="364"/>
        <end position="366"/>
    </location>
</feature>
<feature type="strand" evidence="16">
    <location>
        <begin position="369"/>
        <end position="374"/>
    </location>
</feature>
<feature type="helix" evidence="16">
    <location>
        <begin position="377"/>
        <end position="379"/>
    </location>
</feature>
<feature type="helix" evidence="16">
    <location>
        <begin position="390"/>
        <end position="408"/>
    </location>
</feature>
<protein>
    <recommendedName>
        <fullName evidence="5">Allantoate amidohydrolase</fullName>
        <shortName evidence="7">AAH</shortName>
        <ecNumber evidence="3">3.5.3.9</ecNumber>
    </recommendedName>
    <alternativeName>
        <fullName evidence="6">Allantoate deiminase</fullName>
    </alternativeName>
</protein>
<reference key="1">
    <citation type="journal article" date="1999" name="J. Bacteriol.">
        <title>Genetic analysis of a chromosomal region containing genes required for assimilation of allantoin nitrogen and linked glyoxylate metabolism in Escherichia coli.</title>
        <authorList>
            <person name="Cusa E."/>
            <person name="Obradors N."/>
            <person name="Baldoma L."/>
            <person name="Badia J."/>
            <person name="Aguilar J."/>
        </authorList>
    </citation>
    <scope>NUCLEOTIDE SEQUENCE [GENOMIC DNA]</scope>
    <scope>FUNCTION</scope>
    <scope>PATHWAY</scope>
    <scope>INDUCTION</scope>
    <source>
        <strain>K12 / ECL1</strain>
    </source>
</reference>
<reference key="2">
    <citation type="submission" date="1997-01" db="EMBL/GenBank/DDBJ databases">
        <title>Sequence of minutes 4-25 of Escherichia coli.</title>
        <authorList>
            <person name="Chung E."/>
            <person name="Allen E."/>
            <person name="Araujo R."/>
            <person name="Aparicio A.M."/>
            <person name="Davis K."/>
            <person name="Duncan M."/>
            <person name="Federspiel N."/>
            <person name="Hyman R."/>
            <person name="Kalman S."/>
            <person name="Komp C."/>
            <person name="Kurdi O."/>
            <person name="Lew H."/>
            <person name="Lin D."/>
            <person name="Namath A."/>
            <person name="Oefner P."/>
            <person name="Roberts D."/>
            <person name="Schramm S."/>
            <person name="Davis R.W."/>
        </authorList>
    </citation>
    <scope>NUCLEOTIDE SEQUENCE [LARGE SCALE GENOMIC DNA]</scope>
    <source>
        <strain>K12 / MG1655 / ATCC 47076</strain>
    </source>
</reference>
<reference key="3">
    <citation type="journal article" date="1997" name="Science">
        <title>The complete genome sequence of Escherichia coli K-12.</title>
        <authorList>
            <person name="Blattner F.R."/>
            <person name="Plunkett G. III"/>
            <person name="Bloch C.A."/>
            <person name="Perna N.T."/>
            <person name="Burland V."/>
            <person name="Riley M."/>
            <person name="Collado-Vides J."/>
            <person name="Glasner J.D."/>
            <person name="Rode C.K."/>
            <person name="Mayhew G.F."/>
            <person name="Gregor J."/>
            <person name="Davis N.W."/>
            <person name="Kirkpatrick H.A."/>
            <person name="Goeden M.A."/>
            <person name="Rose D.J."/>
            <person name="Mau B."/>
            <person name="Shao Y."/>
        </authorList>
    </citation>
    <scope>NUCLEOTIDE SEQUENCE [LARGE SCALE GENOMIC DNA]</scope>
    <source>
        <strain>K12 / MG1655 / ATCC 47076</strain>
    </source>
</reference>
<reference key="4">
    <citation type="journal article" date="2006" name="Mol. Syst. Biol.">
        <title>Highly accurate genome sequences of Escherichia coli K-12 strains MG1655 and W3110.</title>
        <authorList>
            <person name="Hayashi K."/>
            <person name="Morooka N."/>
            <person name="Yamamoto Y."/>
            <person name="Fujita K."/>
            <person name="Isono K."/>
            <person name="Choi S."/>
            <person name="Ohtsubo E."/>
            <person name="Baba T."/>
            <person name="Wanner B.L."/>
            <person name="Mori H."/>
            <person name="Horiuchi T."/>
        </authorList>
    </citation>
    <scope>NUCLEOTIDE SEQUENCE [LARGE SCALE GENOMIC DNA]</scope>
    <source>
        <strain>K12 / W3110 / ATCC 27325 / DSM 5911</strain>
    </source>
</reference>
<reference key="5">
    <citation type="journal article" date="2010" name="ACS Chem. Biol.">
        <title>Chemical basis of nitrogen recovery through the ureide pathway: formation and hydrolysis of S-ureidoglycine in plants and bacteria.</title>
        <authorList>
            <person name="Serventi F."/>
            <person name="Ramazzina I."/>
            <person name="Lamberto I."/>
            <person name="Puggioni V."/>
            <person name="Gatti R."/>
            <person name="Percudani R."/>
        </authorList>
    </citation>
    <scope>FUNCTION</scope>
    <scope>CATALYTIC ACTIVITY</scope>
</reference>
<reference key="6">
    <citation type="journal article" date="2007" name="J. Mol. Biol.">
        <title>Structural analysis of a ternary complex of allantoate amidohydrolase from Escherichia coli reveals its mechanics.</title>
        <authorList>
            <person name="Agarwal R."/>
            <person name="Burley S.K."/>
            <person name="Swaminathan S."/>
        </authorList>
    </citation>
    <scope>X-RAY CRYSTALLOGRAPHY (2.25 ANGSTROMS) OF 2-411 IN COMPLEX WITH 2 ZINC IONS AND ALLANTOATE</scope>
    <scope>COFACTOR</scope>
    <scope>ACTIVITY REGULATION</scope>
    <scope>BIOPHYSICOCHEMICAL PROPERTIES</scope>
    <scope>SUBUNIT</scope>
</reference>
<reference key="7">
    <citation type="journal article" date="2014" name="J. Mol. Biol.">
        <title>Structural insights into the substrate specificity of (s)-ureidoglycolate amidohydrolase and its comparison with allantoate amidohydrolase.</title>
        <authorList>
            <person name="Shin I."/>
            <person name="Han K."/>
            <person name="Rhee S."/>
        </authorList>
    </citation>
    <scope>X-RAY CRYSTALLOGRAPHY (2.20 ANGSTROMS) OF MUTANT ALA-126 IN COMPLEX WITH MANGANESE ION AND ALLANTOATE</scope>
    <scope>MUTAGENESIS OF GLU-126</scope>
    <scope>COFACTOR</scope>
</reference>
<evidence type="ECO:0000269" key="1">
    <source>
    </source>
</evidence>
<evidence type="ECO:0000269" key="2">
    <source>
    </source>
</evidence>
<evidence type="ECO:0000269" key="3">
    <source>
    </source>
</evidence>
<evidence type="ECO:0000269" key="4">
    <source>
    </source>
</evidence>
<evidence type="ECO:0000303" key="5">
    <source>
    </source>
</evidence>
<evidence type="ECO:0000303" key="6">
    <source>
    </source>
</evidence>
<evidence type="ECO:0000303" key="7">
    <source>
    </source>
</evidence>
<evidence type="ECO:0000305" key="8"/>
<evidence type="ECO:0000305" key="9">
    <source>
    </source>
</evidence>
<evidence type="ECO:0000305" key="10">
    <source>
    </source>
</evidence>
<evidence type="ECO:0000305" key="11">
    <source>
    </source>
</evidence>
<evidence type="ECO:0007744" key="12">
    <source>
        <dbReference type="PDB" id="1Z2L"/>
    </source>
</evidence>
<evidence type="ECO:0007744" key="13">
    <source>
        <dbReference type="PDB" id="4PXD"/>
    </source>
</evidence>
<evidence type="ECO:0007829" key="14">
    <source>
        <dbReference type="PDB" id="1Z2L"/>
    </source>
</evidence>
<evidence type="ECO:0007829" key="15">
    <source>
        <dbReference type="PDB" id="2IMO"/>
    </source>
</evidence>
<evidence type="ECO:0007829" key="16">
    <source>
        <dbReference type="PDB" id="4PXD"/>
    </source>
</evidence>
<organism>
    <name type="scientific">Escherichia coli (strain K12)</name>
    <dbReference type="NCBI Taxonomy" id="83333"/>
    <lineage>
        <taxon>Bacteria</taxon>
        <taxon>Pseudomonadati</taxon>
        <taxon>Pseudomonadota</taxon>
        <taxon>Gammaproteobacteria</taxon>
        <taxon>Enterobacterales</taxon>
        <taxon>Enterobacteriaceae</taxon>
        <taxon>Escherichia</taxon>
    </lineage>
</organism>
<sequence>MITHFRQAIEETLPWLSSFGADPAGGMTRLLYSPEWLETQQQFKKRMAASGLETRFDEVGNLYGRLNGTEYPQEVVLSGSHIDTVVNGGNLDGQFGALAAWLAIDWLKTQYGAPLRTVEVVAMAEEEGSRFPYVFWGSKNIFGLANPDDVRNICDAKGNSFVDAMKACGFTLPNAPLTPRQDIKAFVELHIEQGCVLESNGQSIGVVNAIVGQRRYTVTLNGESNHAGTTPMGYRRDTVYAFSRICHQSVEKAKRMGDPLVLTFGKVEPRPNTVNVVPGKTTFTIDCRHTDAAVLRDFTQQLENDMRAICDEMDIGIDIDLWMDEEPVPMNKELVATLTELCEREKLNYRVMHSGAGHDAQIFAPRVPTCMIFIPSINGISHNPAERTNITDLAEGVKTLALMLYQLAWQK</sequence>
<proteinExistence type="evidence at protein level"/>
<comment type="function">
    <text evidence="1 3">Involved in the anaerobic nitrogen utilization via the assimilation of allantoin (PubMed:10601204, PubMed:20038185). Catalyzes specifically the hydrolysis of allantoate to yield CO2, NH3 and S-ureidoglycine, which is unstable and readily undergoes a second deamination by S-ureidoglycine aminohydrolase AllE to yield S-ureidoglycolate and NH3 (PubMed:20038185). In vivo, the spontaneous release of S-ureidoglycolate and ammonia from S-ureidoglycine appears to be too slow to sustain an efficient flux of nitrogen (PubMed:20038185).</text>
</comment>
<comment type="catalytic activity">
    <reaction evidence="3">
        <text>allantoate + H2O + 2 H(+) = (S)-2-ureidoglycine + NH4(+) + CO2</text>
        <dbReference type="Rhea" id="RHEA:27485"/>
        <dbReference type="ChEBI" id="CHEBI:15377"/>
        <dbReference type="ChEBI" id="CHEBI:15378"/>
        <dbReference type="ChEBI" id="CHEBI:16526"/>
        <dbReference type="ChEBI" id="CHEBI:17536"/>
        <dbReference type="ChEBI" id="CHEBI:28938"/>
        <dbReference type="ChEBI" id="CHEBI:59947"/>
        <dbReference type="EC" id="3.5.3.9"/>
    </reaction>
</comment>
<comment type="cofactor">
    <cofactor evidence="2">
        <name>Zn(2+)</name>
        <dbReference type="ChEBI" id="CHEBI:29105"/>
    </cofactor>
    <text evidence="2 4">Binds 2 Zn(2+) ions per subunit (PubMed:17362992). Also able to bind Mn(2+) (PubMed:25020232).</text>
</comment>
<comment type="activity regulation">
    <text evidence="10">Sulfate could be an allosteric effector of the enzyme that is responsible for stabilizing substrate binding. In addition, this anion effector may act as a counterion during enzyme-mediated catalysis.</text>
</comment>
<comment type="biophysicochemical properties">
    <phDependence>
        <text evidence="10">Optimum pH is 8. Less active under acidic conditions.</text>
    </phDependence>
</comment>
<comment type="pathway">
    <text evidence="9">Nitrogen metabolism; (S)-allantoin degradation.</text>
</comment>
<comment type="subunit">
    <text evidence="2">Homodimer.</text>
</comment>
<comment type="subcellular location">
    <subcellularLocation>
        <location evidence="8">Cytoplasm</location>
    </subcellularLocation>
</comment>
<comment type="induction">
    <text evidence="1">By glyoxylate and allantoin under anaerobic conditions.</text>
</comment>
<comment type="similarity">
    <text evidence="8">Belongs to the peptidase M20 family.</text>
</comment>
<keyword id="KW-0002">3D-structure</keyword>
<keyword id="KW-0963">Cytoplasm</keyword>
<keyword id="KW-0378">Hydrolase</keyword>
<keyword id="KW-0479">Metal-binding</keyword>
<keyword id="KW-0659">Purine metabolism</keyword>
<keyword id="KW-1185">Reference proteome</keyword>
<keyword id="KW-0862">Zinc</keyword>
<accession>P77425</accession>
<accession>Q2MBR2</accession>
<name>ALLC_ECOLI</name>
<dbReference type="EC" id="3.5.3.9" evidence="3"/>
<dbReference type="EMBL" id="U89279">
    <property type="protein sequence ID" value="AAB93857.1"/>
    <property type="molecule type" value="Genomic_DNA"/>
</dbReference>
<dbReference type="EMBL" id="U82664">
    <property type="protein sequence ID" value="AAB40268.1"/>
    <property type="molecule type" value="Genomic_DNA"/>
</dbReference>
<dbReference type="EMBL" id="U00096">
    <property type="protein sequence ID" value="AAC73618.1"/>
    <property type="molecule type" value="Genomic_DNA"/>
</dbReference>
<dbReference type="EMBL" id="AP009048">
    <property type="protein sequence ID" value="BAE76294.1"/>
    <property type="molecule type" value="Genomic_DNA"/>
</dbReference>
<dbReference type="PIR" id="C64783">
    <property type="entry name" value="C64783"/>
</dbReference>
<dbReference type="RefSeq" id="NP_415049.1">
    <property type="nucleotide sequence ID" value="NC_000913.3"/>
</dbReference>
<dbReference type="RefSeq" id="WP_001310618.1">
    <property type="nucleotide sequence ID" value="NZ_SSZK01000024.1"/>
</dbReference>
<dbReference type="PDB" id="1Z2L">
    <property type="method" value="X-ray"/>
    <property type="resolution" value="2.25 A"/>
    <property type="chains" value="A/B=2-411"/>
</dbReference>
<dbReference type="PDB" id="2IMO">
    <property type="method" value="X-ray"/>
    <property type="resolution" value="2.80 A"/>
    <property type="chains" value="A/B=2-411"/>
</dbReference>
<dbReference type="PDB" id="4PXD">
    <property type="method" value="X-ray"/>
    <property type="resolution" value="2.20 A"/>
    <property type="chains" value="A/B=1-411"/>
</dbReference>
<dbReference type="PDBsum" id="1Z2L"/>
<dbReference type="PDBsum" id="2IMO"/>
<dbReference type="PDBsum" id="4PXD"/>
<dbReference type="SMR" id="P77425"/>
<dbReference type="BioGRID" id="4261167">
    <property type="interactions" value="67"/>
</dbReference>
<dbReference type="BioGRID" id="849538">
    <property type="interactions" value="1"/>
</dbReference>
<dbReference type="DIP" id="DIP-9088N"/>
<dbReference type="FunCoup" id="P77425">
    <property type="interactions" value="397"/>
</dbReference>
<dbReference type="IntAct" id="P77425">
    <property type="interactions" value="9"/>
</dbReference>
<dbReference type="STRING" id="511145.b0516"/>
<dbReference type="DrugBank" id="DB04380">
    <property type="generic name" value="Allantoate"/>
</dbReference>
<dbReference type="MEROPS" id="M20.976"/>
<dbReference type="PaxDb" id="511145-b0516"/>
<dbReference type="DNASU" id="945150"/>
<dbReference type="EnsemblBacteria" id="AAC73618">
    <property type="protein sequence ID" value="AAC73618"/>
    <property type="gene ID" value="b0516"/>
</dbReference>
<dbReference type="GeneID" id="945150"/>
<dbReference type="KEGG" id="ecj:JW0504"/>
<dbReference type="KEGG" id="eco:b0516"/>
<dbReference type="KEGG" id="ecoc:C3026_02530"/>
<dbReference type="PATRIC" id="fig|1411691.4.peg.1762"/>
<dbReference type="EchoBASE" id="EB3388"/>
<dbReference type="eggNOG" id="COG0624">
    <property type="taxonomic scope" value="Bacteria"/>
</dbReference>
<dbReference type="HOGENOM" id="CLU_024588_6_0_6"/>
<dbReference type="InParanoid" id="P77425"/>
<dbReference type="OMA" id="IWPHGRW"/>
<dbReference type="OrthoDB" id="9808195at2"/>
<dbReference type="PhylomeDB" id="P77425"/>
<dbReference type="BioCyc" id="EcoCyc:G6285-MONOMER"/>
<dbReference type="BioCyc" id="MetaCyc:G6285-MONOMER"/>
<dbReference type="BRENDA" id="3.5.3.4">
    <property type="organism ID" value="2026"/>
</dbReference>
<dbReference type="BRENDA" id="3.5.3.9">
    <property type="organism ID" value="2026"/>
</dbReference>
<dbReference type="UniPathway" id="UPA00395"/>
<dbReference type="EvolutionaryTrace" id="P77425"/>
<dbReference type="PRO" id="PR:P77425"/>
<dbReference type="Proteomes" id="UP000000625">
    <property type="component" value="Chromosome"/>
</dbReference>
<dbReference type="GO" id="GO:0005737">
    <property type="term" value="C:cytoplasm"/>
    <property type="evidence" value="ECO:0007669"/>
    <property type="project" value="UniProtKB-SubCell"/>
</dbReference>
<dbReference type="GO" id="GO:0047652">
    <property type="term" value="F:allantoate deiminase activity"/>
    <property type="evidence" value="ECO:0000314"/>
    <property type="project" value="EcoCyc"/>
</dbReference>
<dbReference type="GO" id="GO:0030145">
    <property type="term" value="F:manganese ion binding"/>
    <property type="evidence" value="ECO:0000314"/>
    <property type="project" value="EcoCyc"/>
</dbReference>
<dbReference type="GO" id="GO:0042803">
    <property type="term" value="F:protein homodimerization activity"/>
    <property type="evidence" value="ECO:0000314"/>
    <property type="project" value="EcoCyc"/>
</dbReference>
<dbReference type="GO" id="GO:0008270">
    <property type="term" value="F:zinc ion binding"/>
    <property type="evidence" value="ECO:0000314"/>
    <property type="project" value="UniProtKB"/>
</dbReference>
<dbReference type="GO" id="GO:0009442">
    <property type="term" value="P:allantoin assimilation pathway"/>
    <property type="evidence" value="ECO:0000314"/>
    <property type="project" value="EcoCyc"/>
</dbReference>
<dbReference type="GO" id="GO:0006144">
    <property type="term" value="P:purine nucleobase metabolic process"/>
    <property type="evidence" value="ECO:0007669"/>
    <property type="project" value="UniProtKB-KW"/>
</dbReference>
<dbReference type="CDD" id="cd03884">
    <property type="entry name" value="M20_bAS"/>
    <property type="match status" value="1"/>
</dbReference>
<dbReference type="FunFam" id="3.30.70.360:FF:000013">
    <property type="entry name" value="Allantoate amidohydrolase"/>
    <property type="match status" value="1"/>
</dbReference>
<dbReference type="FunFam" id="3.40.630.10:FF:000044">
    <property type="entry name" value="Allantoate amidohydrolase"/>
    <property type="match status" value="1"/>
</dbReference>
<dbReference type="Gene3D" id="3.30.70.360">
    <property type="match status" value="1"/>
</dbReference>
<dbReference type="Gene3D" id="3.40.630.10">
    <property type="entry name" value="Zn peptidases"/>
    <property type="match status" value="1"/>
</dbReference>
<dbReference type="InterPro" id="IPR017591">
    <property type="entry name" value="Allantoate_amidohydrolase"/>
</dbReference>
<dbReference type="InterPro" id="IPR010158">
    <property type="entry name" value="Amidase_Cbmase"/>
</dbReference>
<dbReference type="InterPro" id="IPR036264">
    <property type="entry name" value="Bact_exopeptidase_dim_dom"/>
</dbReference>
<dbReference type="InterPro" id="IPR002933">
    <property type="entry name" value="Peptidase_M20"/>
</dbReference>
<dbReference type="NCBIfam" id="TIGR03176">
    <property type="entry name" value="AllC"/>
    <property type="match status" value="1"/>
</dbReference>
<dbReference type="NCBIfam" id="TIGR01879">
    <property type="entry name" value="hydantase"/>
    <property type="match status" value="1"/>
</dbReference>
<dbReference type="NCBIfam" id="NF006768">
    <property type="entry name" value="PRK09290.1-1"/>
    <property type="match status" value="1"/>
</dbReference>
<dbReference type="NCBIfam" id="NF006771">
    <property type="entry name" value="PRK09290.1-5"/>
    <property type="match status" value="1"/>
</dbReference>
<dbReference type="PANTHER" id="PTHR32494:SF5">
    <property type="entry name" value="ALLANTOATE AMIDOHYDROLASE"/>
    <property type="match status" value="1"/>
</dbReference>
<dbReference type="PANTHER" id="PTHR32494">
    <property type="entry name" value="ALLANTOATE DEIMINASE-RELATED"/>
    <property type="match status" value="1"/>
</dbReference>
<dbReference type="Pfam" id="PF01546">
    <property type="entry name" value="Peptidase_M20"/>
    <property type="match status" value="1"/>
</dbReference>
<dbReference type="PIRSF" id="PIRSF001235">
    <property type="entry name" value="Amidase_carbamoylase"/>
    <property type="match status" value="1"/>
</dbReference>
<dbReference type="SUPFAM" id="SSF55031">
    <property type="entry name" value="Bacterial exopeptidase dimerisation domain"/>
    <property type="match status" value="1"/>
</dbReference>
<dbReference type="SUPFAM" id="SSF53187">
    <property type="entry name" value="Zn-dependent exopeptidases"/>
    <property type="match status" value="1"/>
</dbReference>
<gene>
    <name evidence="5" type="primary">allC</name>
    <name type="synonym">glxB7</name>
    <name type="synonym">ylbB</name>
    <name type="ordered locus">b0516</name>
    <name type="ordered locus">JW0504</name>
</gene>